<gene>
    <name evidence="1" type="primary">ileS</name>
    <name type="ordered locus">SUN_1796</name>
</gene>
<name>SYI_SULNB</name>
<keyword id="KW-0030">Aminoacyl-tRNA synthetase</keyword>
<keyword id="KW-0067">ATP-binding</keyword>
<keyword id="KW-0963">Cytoplasm</keyword>
<keyword id="KW-0436">Ligase</keyword>
<keyword id="KW-0479">Metal-binding</keyword>
<keyword id="KW-0547">Nucleotide-binding</keyword>
<keyword id="KW-0648">Protein biosynthesis</keyword>
<keyword id="KW-0862">Zinc</keyword>
<sequence>MDFKETLLLPKTDFPMRGNLPANEPKKYKTWFDTNIYEQMKAKREGAELFTLHDGPPYANGDIHIGHALNKILKDIILKYNYFQGKAVRMTPGWDCHGLPIEQKVEEKLGKSKKEAMPTEKFRELCRAHAGKFVDIQRDEFKSLGVVADWENPYVTMDFKFEANIYRTLCEVAKRGLLVERHKPIFWSWAARTALADAEVEYEDKEDYSIYVHFELSDAAKEKLGLEGKAGLVIWTTTPWTLPANTGISINPDEMYVLTDDGHIVADARYDAMIEEGVVAGHASRKIAATELDGLLAINPLNERPSKVVLGEHVMMDGGTGCVHTAPGHGEDDYKVGLENGLEVVMPVDERGCYDESVVGLDLLPDAEKFVGMHIFKANEPILELLGDNLLKVSKFTHSYPHCWRTKKPLIYRATNQWFISIDDAAKGSDKTLREAAVDAIDSVDFYPASSKNRLKPMVEGRPDWCISRQRSWGVPIAFFRVKSTKAVIFDEDVLEHVASLFDEHGADAWYSMSIAELLPAGSKYDPADLEKIEDILDVWFDSGSTWNSVLSSGNYDAGNYPASLYLEGSDQHRGWFQSSLLLSSAINGIAPYETIITHGFTMDAKGEKMSKSKGNVVAPEKVVKQFGSEILRLWVALSDYQNDQKISDDILKQTAEQYRKIRNTFRFLLANVNDLDALVSADAYGELDRWILNKADDVFASVKESFETYDFLKGFATLNHFITNELSGIYMDVTKDRLYCEAKDSDVRRATQSAMALISKAMLGLIAPVLTYTADEILAYAPAIFKGDIENVFDLVYEAVPETAASFDDAILLEAREKFSEAIDSLKKEKVIKATLELEIAGDRDLLPISDDKDLEDWFVVSAVKESSKGEQVASFKVEGRTFTVHKAMMAKCPRCWRFTSTSEDCLCERCAKVVGA</sequence>
<reference key="1">
    <citation type="journal article" date="2007" name="Proc. Natl. Acad. Sci. U.S.A.">
        <title>Deep-sea vent epsilon-proteobacterial genomes provide insights into emergence of pathogens.</title>
        <authorList>
            <person name="Nakagawa S."/>
            <person name="Takaki Y."/>
            <person name="Shimamura S."/>
            <person name="Reysenbach A.-L."/>
            <person name="Takai K."/>
            <person name="Horikoshi K."/>
        </authorList>
    </citation>
    <scope>NUCLEOTIDE SEQUENCE [LARGE SCALE GENOMIC DNA]</scope>
    <source>
        <strain>NBC37-1</strain>
    </source>
</reference>
<dbReference type="EC" id="6.1.1.5" evidence="1"/>
<dbReference type="EMBL" id="AP009179">
    <property type="protein sequence ID" value="BAF72743.1"/>
    <property type="molecule type" value="Genomic_DNA"/>
</dbReference>
<dbReference type="RefSeq" id="WP_012083554.1">
    <property type="nucleotide sequence ID" value="NC_009663.1"/>
</dbReference>
<dbReference type="SMR" id="A6QB84"/>
<dbReference type="STRING" id="387093.SUN_1796"/>
<dbReference type="KEGG" id="sun:SUN_1796"/>
<dbReference type="eggNOG" id="COG0060">
    <property type="taxonomic scope" value="Bacteria"/>
</dbReference>
<dbReference type="HOGENOM" id="CLU_001493_7_0_7"/>
<dbReference type="OrthoDB" id="9810365at2"/>
<dbReference type="Proteomes" id="UP000006378">
    <property type="component" value="Chromosome"/>
</dbReference>
<dbReference type="GO" id="GO:0005829">
    <property type="term" value="C:cytosol"/>
    <property type="evidence" value="ECO:0007669"/>
    <property type="project" value="TreeGrafter"/>
</dbReference>
<dbReference type="GO" id="GO:0002161">
    <property type="term" value="F:aminoacyl-tRNA deacylase activity"/>
    <property type="evidence" value="ECO:0007669"/>
    <property type="project" value="InterPro"/>
</dbReference>
<dbReference type="GO" id="GO:0005524">
    <property type="term" value="F:ATP binding"/>
    <property type="evidence" value="ECO:0007669"/>
    <property type="project" value="UniProtKB-UniRule"/>
</dbReference>
<dbReference type="GO" id="GO:0004822">
    <property type="term" value="F:isoleucine-tRNA ligase activity"/>
    <property type="evidence" value="ECO:0007669"/>
    <property type="project" value="UniProtKB-UniRule"/>
</dbReference>
<dbReference type="GO" id="GO:0000049">
    <property type="term" value="F:tRNA binding"/>
    <property type="evidence" value="ECO:0007669"/>
    <property type="project" value="InterPro"/>
</dbReference>
<dbReference type="GO" id="GO:0008270">
    <property type="term" value="F:zinc ion binding"/>
    <property type="evidence" value="ECO:0007669"/>
    <property type="project" value="UniProtKB-UniRule"/>
</dbReference>
<dbReference type="GO" id="GO:0006428">
    <property type="term" value="P:isoleucyl-tRNA aminoacylation"/>
    <property type="evidence" value="ECO:0007669"/>
    <property type="project" value="UniProtKB-UniRule"/>
</dbReference>
<dbReference type="CDD" id="cd07960">
    <property type="entry name" value="Anticodon_Ia_Ile_BEm"/>
    <property type="match status" value="1"/>
</dbReference>
<dbReference type="FunFam" id="3.40.50.620:FF:000092">
    <property type="entry name" value="Isoleucine--tRNA ligase"/>
    <property type="match status" value="1"/>
</dbReference>
<dbReference type="Gene3D" id="1.10.730.20">
    <property type="match status" value="1"/>
</dbReference>
<dbReference type="Gene3D" id="3.40.50.620">
    <property type="entry name" value="HUPs"/>
    <property type="match status" value="2"/>
</dbReference>
<dbReference type="Gene3D" id="1.10.10.830">
    <property type="entry name" value="Ile-tRNA synthetase CP2 domain-like"/>
    <property type="match status" value="1"/>
</dbReference>
<dbReference type="Gene3D" id="3.90.740.10">
    <property type="entry name" value="Valyl/Leucyl/Isoleucyl-tRNA synthetase, editing domain"/>
    <property type="match status" value="1"/>
</dbReference>
<dbReference type="HAMAP" id="MF_02002">
    <property type="entry name" value="Ile_tRNA_synth_type1"/>
    <property type="match status" value="1"/>
</dbReference>
<dbReference type="InterPro" id="IPR001412">
    <property type="entry name" value="aa-tRNA-synth_I_CS"/>
</dbReference>
<dbReference type="InterPro" id="IPR002300">
    <property type="entry name" value="aa-tRNA-synth_Ia"/>
</dbReference>
<dbReference type="InterPro" id="IPR033708">
    <property type="entry name" value="Anticodon_Ile_BEm"/>
</dbReference>
<dbReference type="InterPro" id="IPR002301">
    <property type="entry name" value="Ile-tRNA-ligase"/>
</dbReference>
<dbReference type="InterPro" id="IPR023585">
    <property type="entry name" value="Ile-tRNA-ligase_type1"/>
</dbReference>
<dbReference type="InterPro" id="IPR050081">
    <property type="entry name" value="Ile-tRNA_ligase"/>
</dbReference>
<dbReference type="InterPro" id="IPR013155">
    <property type="entry name" value="M/V/L/I-tRNA-synth_anticd-bd"/>
</dbReference>
<dbReference type="InterPro" id="IPR014729">
    <property type="entry name" value="Rossmann-like_a/b/a_fold"/>
</dbReference>
<dbReference type="InterPro" id="IPR009080">
    <property type="entry name" value="tRNAsynth_Ia_anticodon-bd"/>
</dbReference>
<dbReference type="InterPro" id="IPR009008">
    <property type="entry name" value="Val/Leu/Ile-tRNA-synth_edit"/>
</dbReference>
<dbReference type="NCBIfam" id="TIGR00392">
    <property type="entry name" value="ileS"/>
    <property type="match status" value="1"/>
</dbReference>
<dbReference type="PANTHER" id="PTHR42765:SF1">
    <property type="entry name" value="ISOLEUCINE--TRNA LIGASE, MITOCHONDRIAL"/>
    <property type="match status" value="1"/>
</dbReference>
<dbReference type="PANTHER" id="PTHR42765">
    <property type="entry name" value="SOLEUCYL-TRNA SYNTHETASE"/>
    <property type="match status" value="1"/>
</dbReference>
<dbReference type="Pfam" id="PF08264">
    <property type="entry name" value="Anticodon_1"/>
    <property type="match status" value="1"/>
</dbReference>
<dbReference type="Pfam" id="PF00133">
    <property type="entry name" value="tRNA-synt_1"/>
    <property type="match status" value="1"/>
</dbReference>
<dbReference type="PRINTS" id="PR00984">
    <property type="entry name" value="TRNASYNTHILE"/>
</dbReference>
<dbReference type="SUPFAM" id="SSF47323">
    <property type="entry name" value="Anticodon-binding domain of a subclass of class I aminoacyl-tRNA synthetases"/>
    <property type="match status" value="1"/>
</dbReference>
<dbReference type="SUPFAM" id="SSF52374">
    <property type="entry name" value="Nucleotidylyl transferase"/>
    <property type="match status" value="1"/>
</dbReference>
<dbReference type="SUPFAM" id="SSF50677">
    <property type="entry name" value="ValRS/IleRS/LeuRS editing domain"/>
    <property type="match status" value="1"/>
</dbReference>
<dbReference type="PROSITE" id="PS00178">
    <property type="entry name" value="AA_TRNA_LIGASE_I"/>
    <property type="match status" value="1"/>
</dbReference>
<proteinExistence type="inferred from homology"/>
<evidence type="ECO:0000255" key="1">
    <source>
        <dbReference type="HAMAP-Rule" id="MF_02002"/>
    </source>
</evidence>
<accession>A6QB84</accession>
<comment type="function">
    <text evidence="1">Catalyzes the attachment of isoleucine to tRNA(Ile). As IleRS can inadvertently accommodate and process structurally similar amino acids such as valine, to avoid such errors it has two additional distinct tRNA(Ile)-dependent editing activities. One activity is designated as 'pretransfer' editing and involves the hydrolysis of activated Val-AMP. The other activity is designated 'posttransfer' editing and involves deacylation of mischarged Val-tRNA(Ile).</text>
</comment>
<comment type="catalytic activity">
    <reaction evidence="1">
        <text>tRNA(Ile) + L-isoleucine + ATP = L-isoleucyl-tRNA(Ile) + AMP + diphosphate</text>
        <dbReference type="Rhea" id="RHEA:11060"/>
        <dbReference type="Rhea" id="RHEA-COMP:9666"/>
        <dbReference type="Rhea" id="RHEA-COMP:9695"/>
        <dbReference type="ChEBI" id="CHEBI:30616"/>
        <dbReference type="ChEBI" id="CHEBI:33019"/>
        <dbReference type="ChEBI" id="CHEBI:58045"/>
        <dbReference type="ChEBI" id="CHEBI:78442"/>
        <dbReference type="ChEBI" id="CHEBI:78528"/>
        <dbReference type="ChEBI" id="CHEBI:456215"/>
        <dbReference type="EC" id="6.1.1.5"/>
    </reaction>
</comment>
<comment type="cofactor">
    <cofactor evidence="1">
        <name>Zn(2+)</name>
        <dbReference type="ChEBI" id="CHEBI:29105"/>
    </cofactor>
    <text evidence="1">Binds 1 zinc ion per subunit.</text>
</comment>
<comment type="subunit">
    <text evidence="1">Monomer.</text>
</comment>
<comment type="subcellular location">
    <subcellularLocation>
        <location evidence="1">Cytoplasm</location>
    </subcellularLocation>
</comment>
<comment type="domain">
    <text evidence="1">IleRS has two distinct active sites: one for aminoacylation and one for editing. The misactivated valine is translocated from the active site to the editing site, which sterically excludes the correctly activated isoleucine. The single editing site contains two valyl binding pockets, one specific for each substrate (Val-AMP or Val-tRNA(Ile)).</text>
</comment>
<comment type="similarity">
    <text evidence="1">Belongs to the class-I aminoacyl-tRNA synthetase family. IleS type 1 subfamily.</text>
</comment>
<organism>
    <name type="scientific">Sulfurovum sp. (strain NBC37-1)</name>
    <dbReference type="NCBI Taxonomy" id="387093"/>
    <lineage>
        <taxon>Bacteria</taxon>
        <taxon>Pseudomonadati</taxon>
        <taxon>Campylobacterota</taxon>
        <taxon>Epsilonproteobacteria</taxon>
        <taxon>Campylobacterales</taxon>
        <taxon>Sulfurovaceae</taxon>
        <taxon>Sulfurovum</taxon>
    </lineage>
</organism>
<feature type="chain" id="PRO_1000022134" description="Isoleucine--tRNA ligase">
    <location>
        <begin position="1"/>
        <end position="918"/>
    </location>
</feature>
<feature type="short sequence motif" description="'HIGH' region">
    <location>
        <begin position="57"/>
        <end position="67"/>
    </location>
</feature>
<feature type="short sequence motif" description="'KMSKS' region">
    <location>
        <begin position="609"/>
        <end position="613"/>
    </location>
</feature>
<feature type="binding site" evidence="1">
    <location>
        <position position="568"/>
    </location>
    <ligand>
        <name>L-isoleucyl-5'-AMP</name>
        <dbReference type="ChEBI" id="CHEBI:178002"/>
    </ligand>
</feature>
<feature type="binding site" evidence="1">
    <location>
        <position position="612"/>
    </location>
    <ligand>
        <name>ATP</name>
        <dbReference type="ChEBI" id="CHEBI:30616"/>
    </ligand>
</feature>
<feature type="binding site" evidence="1">
    <location>
        <position position="894"/>
    </location>
    <ligand>
        <name>Zn(2+)</name>
        <dbReference type="ChEBI" id="CHEBI:29105"/>
    </ligand>
</feature>
<feature type="binding site" evidence="1">
    <location>
        <position position="897"/>
    </location>
    <ligand>
        <name>Zn(2+)</name>
        <dbReference type="ChEBI" id="CHEBI:29105"/>
    </ligand>
</feature>
<feature type="binding site" evidence="1">
    <location>
        <position position="909"/>
    </location>
    <ligand>
        <name>Zn(2+)</name>
        <dbReference type="ChEBI" id="CHEBI:29105"/>
    </ligand>
</feature>
<feature type="binding site" evidence="1">
    <location>
        <position position="912"/>
    </location>
    <ligand>
        <name>Zn(2+)</name>
        <dbReference type="ChEBI" id="CHEBI:29105"/>
    </ligand>
</feature>
<protein>
    <recommendedName>
        <fullName evidence="1">Isoleucine--tRNA ligase</fullName>
        <ecNumber evidence="1">6.1.1.5</ecNumber>
    </recommendedName>
    <alternativeName>
        <fullName evidence="1">Isoleucyl-tRNA synthetase</fullName>
        <shortName evidence="1">IleRS</shortName>
    </alternativeName>
</protein>